<sequence>MLSVHFWQTPVRPTDAASSLANGIQTPTHRRCQTSNWTGQLSSRTLATIAARAAAPWLQTTSAASFGSPPTSLWLAEAPPQGLKNWAVVATVAVVPTALGPAQARGNLFQATLWPLRDQRGTQDSPSAHHCLILSLKPGQGLRMEGGTSDMNSQTSLTPAEDPVSRPQDSPEPRQQLRPLPEPSASTLPEAKYVETCASAGLRRESPQTLKLPPEQQASRSPKTKAQDEPSGHAPEAPAPGESPASSQCLPSQACENDFSSSSSSSSSLVDSAEDNGLSKMDDPTKLLGVLATSSSSLGFESDPETSCRQHREEAGDRAGAGEDKRGGVDDGIASCKDIIAKSHSKRGPLRNEDAHYITTHEIQLTEVEQGMDFDVGLASRWDFEDNNVIYSFVDYASFGGSDETPGDITTEEDDDNSCYVSTTPSTNTTRTPSPISSDLARPGAGSSGRDTSSTEVGSGPSDSDTVPPPTGPGTATPPEPLLELREAALGASATAASSCGSAASQILLSIKPTSRAINEPSNVRAKQNIIYAAKHEGDMSLRVSSAAEHNSSSLKQNSAAAVAQDHAKKFIAVPARLQTRCGAIRAKELVDYASGASSAVSELDDADKEVRNLTSRAFRSLAYPYFEALNISSRESSTTLSEVGFGRWSTFLDLKCGGVGARVEQSLLRSSAASVAAGLRKGGGTRATADQLYLQTKKSQTKALEFVVSKVEGEIKHVETPLCFQKQVQTGSRVVTLLEPLNLRSESKASSATGPCRITKGSSKGPGSVYTDDGSETSESSKPASRSDGPQKKSKFASSLLKNVISKKMQREHEFKMERGEVTDTSHRNPPSTKETEGPPGAEKPWERGLQRQSSRHSEASSEYTVVSVSDAGGEGSVVGSKSPIFKASTPRESHTGSGQNVSDGHTEVCEIKKSASETVKGIFLRSQNSAFRTWKEKEAEKLEEKAPVGRLKLRKGGDWRADLGEISASKSTIMSRLFVPNIQQTPKDKQPEKQATKYPAAAAQATSVAVIRPKAPEIKIRLGSVQQPSSDFNIAKLLTPKLASGSSSKLFKTIEDNSRTQQKLFRGGDNLEKVPQFQVRDVRDKSKASGPLHQVRDVRKLIKGSGDSSDKGSVTPEQGLTGPKPRQLTPASGGSRSLSPMVIMCQAVANPREEGVDREPREGVSQVSNGGRLLNSSPEGTVLVHRASGRLPVATIAPNKSEQGSYLPVLKIVSKASAQRTPEKPKEEEAKEEGKAPKPARNALEKLTAAVRSMEELYSFNRNEWKRKSDPLPMMADSHVLSLIASEEKEGVAGPEGGDPDKLAKQLGQVEERDTGHKGGVVLRAAPIERLQRRNSNPSTESVSARAAAFENMARERPRSLYIPPVHKDVERTQPLQPLPPLPGNRNVFTVSSSSTQKTGGVAGKFPQGPSPEGLSTAKGIKAQGLRSLKISPATRAPPEDASNRKTAVSLEKSNSDCENYLTIPLKGSAASAELLGRPGASRDGPPSSSAATLCSLPPLSARSQVPSNPKGSQVSGTSRPAWRTKPDNHRETVVAAPTGPQSPEHTPTAVYHQQALPFTLQGAQPQVLCFSPPGMPAPAPAGPAAVPTDPFQQPQPQQTQRKMLLDVTTGQYYLVDTPVQPMTRRLFDPETGQYVDVPMTSQQQPVAPMSLPVPPLALSPGAYGPTYMIYPGFLPTVLPPNALQPTPMAHTPGGSELSVATEPPSKETAAAFTEAPYFMASSQSPASSSSSAPAATPQLVGAKGFAQLHGKPVISITSQPLGPRIIAPPSFDGTTMSFVVEHR</sequence>
<evidence type="ECO:0000256" key="1">
    <source>
        <dbReference type="SAM" id="MobiDB-lite"/>
    </source>
</evidence>
<evidence type="ECO:0000305" key="2"/>
<evidence type="ECO:0007744" key="3">
    <source>
    </source>
</evidence>
<evidence type="ECO:0007744" key="4">
    <source>
    </source>
</evidence>
<reference key="1">
    <citation type="journal article" date="2009" name="PLoS Biol.">
        <title>Lineage-specific biology revealed by a finished genome assembly of the mouse.</title>
        <authorList>
            <person name="Church D.M."/>
            <person name="Goodstadt L."/>
            <person name="Hillier L.W."/>
            <person name="Zody M.C."/>
            <person name="Goldstein S."/>
            <person name="She X."/>
            <person name="Bult C.J."/>
            <person name="Agarwala R."/>
            <person name="Cherry J.L."/>
            <person name="DiCuccio M."/>
            <person name="Hlavina W."/>
            <person name="Kapustin Y."/>
            <person name="Meric P."/>
            <person name="Maglott D."/>
            <person name="Birtle Z."/>
            <person name="Marques A.C."/>
            <person name="Graves T."/>
            <person name="Zhou S."/>
            <person name="Teague B."/>
            <person name="Potamousis K."/>
            <person name="Churas C."/>
            <person name="Place M."/>
            <person name="Herschleb J."/>
            <person name="Runnheim R."/>
            <person name="Forrest D."/>
            <person name="Amos-Landgraf J."/>
            <person name="Schwartz D.C."/>
            <person name="Cheng Z."/>
            <person name="Lindblad-Toh K."/>
            <person name="Eichler E.E."/>
            <person name="Ponting C.P."/>
        </authorList>
    </citation>
    <scope>NUCLEOTIDE SEQUENCE [LARGE SCALE GENOMIC DNA]</scope>
    <source>
        <strain>C57BL/6J</strain>
    </source>
</reference>
<reference key="2">
    <citation type="journal article" date="2010" name="Cell">
        <title>A tissue-specific atlas of mouse protein phosphorylation and expression.</title>
        <authorList>
            <person name="Huttlin E.L."/>
            <person name="Jedrychowski M.P."/>
            <person name="Elias J.E."/>
            <person name="Goswami T."/>
            <person name="Rad R."/>
            <person name="Beausoleil S.A."/>
            <person name="Villen J."/>
            <person name="Haas W."/>
            <person name="Sowa M.E."/>
            <person name="Gygi S.P."/>
        </authorList>
    </citation>
    <scope>PHOSPHORYLATION [LARGE SCALE ANALYSIS] AT THR-721 AND SER-1179</scope>
    <scope>IDENTIFICATION BY MASS SPECTROMETRY [LARGE SCALE ANALYSIS]</scope>
    <source>
        <tissue>Brown adipose tissue</tissue>
        <tissue>Heart</tissue>
    </source>
</reference>
<reference key="3">
    <citation type="journal article" date="2014" name="Mol. Cell. Proteomics">
        <title>Immunoaffinity enrichment and mass spectrometry analysis of protein methylation.</title>
        <authorList>
            <person name="Guo A."/>
            <person name="Gu H."/>
            <person name="Zhou J."/>
            <person name="Mulhern D."/>
            <person name="Wang Y."/>
            <person name="Lee K.A."/>
            <person name="Yang V."/>
            <person name="Aguiar M."/>
            <person name="Kornhauser J."/>
            <person name="Jia X."/>
            <person name="Ren J."/>
            <person name="Beausoleil S.A."/>
            <person name="Silva J.C."/>
            <person name="Vemulapalli V."/>
            <person name="Bedford M.T."/>
            <person name="Comb M.J."/>
        </authorList>
    </citation>
    <scope>METHYLATION [LARGE SCALE ANALYSIS] AT ARG-1767</scope>
    <scope>IDENTIFICATION BY MASS SPECTROMETRY [LARGE SCALE ANALYSIS]</scope>
    <source>
        <tissue>Brain</tissue>
        <tissue>Embryo</tissue>
    </source>
</reference>
<organism>
    <name type="scientific">Mus musculus</name>
    <name type="common">Mouse</name>
    <dbReference type="NCBI Taxonomy" id="10090"/>
    <lineage>
        <taxon>Eukaryota</taxon>
        <taxon>Metazoa</taxon>
        <taxon>Chordata</taxon>
        <taxon>Craniata</taxon>
        <taxon>Vertebrata</taxon>
        <taxon>Euteleostomi</taxon>
        <taxon>Mammalia</taxon>
        <taxon>Eutheria</taxon>
        <taxon>Euarchontoglires</taxon>
        <taxon>Glires</taxon>
        <taxon>Rodentia</taxon>
        <taxon>Myomorpha</taxon>
        <taxon>Muroidea</taxon>
        <taxon>Muridae</taxon>
        <taxon>Murinae</taxon>
        <taxon>Mus</taxon>
        <taxon>Mus</taxon>
    </lineage>
</organism>
<protein>
    <recommendedName>
        <fullName evidence="2">Uncharacterized protein C4orf54 homolog</fullName>
    </recommendedName>
</protein>
<name>CD054_MOUSE</name>
<proteinExistence type="evidence at protein level"/>
<feature type="chain" id="PRO_0000444030" description="Uncharacterized protein C4orf54 homolog">
    <location>
        <begin position="1"/>
        <end position="1786"/>
    </location>
</feature>
<feature type="region of interest" description="Disordered" evidence="1">
    <location>
        <begin position="140"/>
        <end position="191"/>
    </location>
</feature>
<feature type="region of interest" description="Disordered" evidence="1">
    <location>
        <begin position="203"/>
        <end position="329"/>
    </location>
</feature>
<feature type="region of interest" description="Disordered" evidence="1">
    <location>
        <begin position="400"/>
        <end position="480"/>
    </location>
</feature>
<feature type="region of interest" description="Disordered" evidence="1">
    <location>
        <begin position="746"/>
        <end position="907"/>
    </location>
</feature>
<feature type="region of interest" description="Disordered" evidence="1">
    <location>
        <begin position="1081"/>
        <end position="1180"/>
    </location>
</feature>
<feature type="region of interest" description="Disordered" evidence="1">
    <location>
        <begin position="1218"/>
        <end position="1242"/>
    </location>
</feature>
<feature type="region of interest" description="Disordered" evidence="1">
    <location>
        <begin position="1291"/>
        <end position="1348"/>
    </location>
</feature>
<feature type="region of interest" description="Disordered" evidence="1">
    <location>
        <begin position="1362"/>
        <end position="1460"/>
    </location>
</feature>
<feature type="region of interest" description="Disordered" evidence="1">
    <location>
        <begin position="1477"/>
        <end position="1550"/>
    </location>
</feature>
<feature type="compositionally biased region" description="Polar residues" evidence="1">
    <location>
        <begin position="149"/>
        <end position="158"/>
    </location>
</feature>
<feature type="compositionally biased region" description="Low complexity" evidence="1">
    <location>
        <begin position="232"/>
        <end position="247"/>
    </location>
</feature>
<feature type="compositionally biased region" description="Polar residues" evidence="1">
    <location>
        <begin position="248"/>
        <end position="259"/>
    </location>
</feature>
<feature type="compositionally biased region" description="Basic and acidic residues" evidence="1">
    <location>
        <begin position="306"/>
        <end position="329"/>
    </location>
</feature>
<feature type="compositionally biased region" description="Low complexity" evidence="1">
    <location>
        <begin position="422"/>
        <end position="438"/>
    </location>
</feature>
<feature type="compositionally biased region" description="Pro residues" evidence="1">
    <location>
        <begin position="467"/>
        <end position="480"/>
    </location>
</feature>
<feature type="compositionally biased region" description="Basic and acidic residues" evidence="1">
    <location>
        <begin position="810"/>
        <end position="828"/>
    </location>
</feature>
<feature type="compositionally biased region" description="Basic and acidic residues" evidence="1">
    <location>
        <begin position="845"/>
        <end position="861"/>
    </location>
</feature>
<feature type="compositionally biased region" description="Low complexity" evidence="1">
    <location>
        <begin position="1105"/>
        <end position="1115"/>
    </location>
</feature>
<feature type="compositionally biased region" description="Polar residues" evidence="1">
    <location>
        <begin position="1131"/>
        <end position="1140"/>
    </location>
</feature>
<feature type="compositionally biased region" description="Basic and acidic residues" evidence="1">
    <location>
        <begin position="1153"/>
        <end position="1164"/>
    </location>
</feature>
<feature type="compositionally biased region" description="Polar residues" evidence="1">
    <location>
        <begin position="1167"/>
        <end position="1180"/>
    </location>
</feature>
<feature type="compositionally biased region" description="Basic and acidic residues" evidence="1">
    <location>
        <begin position="1223"/>
        <end position="1238"/>
    </location>
</feature>
<feature type="compositionally biased region" description="Basic and acidic residues" evidence="1">
    <location>
        <begin position="1301"/>
        <end position="1319"/>
    </location>
</feature>
<feature type="compositionally biased region" description="Polar residues" evidence="1">
    <location>
        <begin position="1336"/>
        <end position="1345"/>
    </location>
</feature>
<feature type="compositionally biased region" description="Polar residues" evidence="1">
    <location>
        <begin position="1389"/>
        <end position="1401"/>
    </location>
</feature>
<feature type="compositionally biased region" description="Polar residues" evidence="1">
    <location>
        <begin position="1504"/>
        <end position="1521"/>
    </location>
</feature>
<feature type="modified residue" description="Phosphothreonine" evidence="3">
    <location>
        <position position="721"/>
    </location>
</feature>
<feature type="modified residue" description="Phosphoserine" evidence="3">
    <location>
        <position position="1179"/>
    </location>
</feature>
<feature type="modified residue" description="Omega-N-methylarginine" evidence="4">
    <location>
        <position position="1767"/>
    </location>
</feature>
<keyword id="KW-0488">Methylation</keyword>
<keyword id="KW-0597">Phosphoprotein</keyword>
<keyword id="KW-1185">Reference proteome</keyword>
<dbReference type="EMBL" id="AC131122">
    <property type="status" value="NOT_ANNOTATED_CDS"/>
    <property type="molecule type" value="Genomic_DNA"/>
</dbReference>
<dbReference type="CCDS" id="CCDS89691.1"/>
<dbReference type="RefSeq" id="NP_001357791.1">
    <property type="nucleotide sequence ID" value="NM_001370862.2"/>
</dbReference>
<dbReference type="RefSeq" id="XP_006502617.1">
    <property type="nucleotide sequence ID" value="XM_006502554.1"/>
</dbReference>
<dbReference type="RefSeq" id="XP_030108199.1">
    <property type="nucleotide sequence ID" value="XM_030252339.2"/>
</dbReference>
<dbReference type="GlyGen" id="E0CYV9">
    <property type="glycosylation" value="2 sites"/>
</dbReference>
<dbReference type="iPTMnet" id="E0CYV9"/>
<dbReference type="PhosphoSitePlus" id="E0CYV9"/>
<dbReference type="PaxDb" id="10090-ENSMUSP00000123851"/>
<dbReference type="ProteomicsDB" id="322615"/>
<dbReference type="Antibodypedia" id="81805">
    <property type="antibodies" value="2 antibodies from 2 providers"/>
</dbReference>
<dbReference type="Ensembl" id="ENSMUST00000163080.3">
    <property type="protein sequence ID" value="ENSMUSP00000123851.2"/>
    <property type="gene ID" value="ENSMUSG00000090066.3"/>
</dbReference>
<dbReference type="GeneID" id="102634333"/>
<dbReference type="AGR" id="MGI:1915066"/>
<dbReference type="MGI" id="MGI:1915066">
    <property type="gene designation" value="1110002E22Rik"/>
</dbReference>
<dbReference type="VEuPathDB" id="HostDB:ENSMUSG00000090066"/>
<dbReference type="eggNOG" id="ENOG502QW5W">
    <property type="taxonomic scope" value="Eukaryota"/>
</dbReference>
<dbReference type="GeneTree" id="ENSGT00730000111645"/>
<dbReference type="HOGENOM" id="CLU_003127_0_0_1"/>
<dbReference type="InParanoid" id="E0CYV9"/>
<dbReference type="OMA" id="RRTQDFP"/>
<dbReference type="OrthoDB" id="8945866at2759"/>
<dbReference type="TreeFam" id="TF343894"/>
<dbReference type="PRO" id="PR:E0CYV9"/>
<dbReference type="Proteomes" id="UP000000589">
    <property type="component" value="Chromosome 3"/>
</dbReference>
<dbReference type="RNAct" id="E0CYV9">
    <property type="molecule type" value="protein"/>
</dbReference>
<dbReference type="Bgee" id="ENSMUSG00000090066">
    <property type="expression patterns" value="Expressed in gastrocnemius medialis and 120 other cell types or tissues"/>
</dbReference>
<dbReference type="InterPro" id="IPR052303">
    <property type="entry name" value="CEFIP"/>
</dbReference>
<dbReference type="InterPro" id="IPR027838">
    <property type="entry name" value="DUF4585"/>
</dbReference>
<dbReference type="PANTHER" id="PTHR33775">
    <property type="entry name" value="CARDIAC-ENRICHED FHL2-INTERACTING PROTEIN-RELATED"/>
    <property type="match status" value="1"/>
</dbReference>
<dbReference type="PANTHER" id="PTHR33775:SF4">
    <property type="entry name" value="CHROMOSOME 4 OPEN READING FRAME 54"/>
    <property type="match status" value="1"/>
</dbReference>
<dbReference type="Pfam" id="PF15232">
    <property type="entry name" value="DUF4585"/>
    <property type="match status" value="1"/>
</dbReference>
<accession>E0CYV9</accession>